<feature type="chain" id="PRO_0000069746" description="Melatonin receptor type 1B-A">
    <location>
        <begin position="1"/>
        <end position="287" status="greater than"/>
    </location>
</feature>
<feature type="topological domain" description="Extracellular" evidence="2">
    <location>
        <begin position="1"/>
        <end position="28"/>
    </location>
</feature>
<feature type="transmembrane region" description="Helical; Name=1" evidence="2">
    <location>
        <begin position="29"/>
        <end position="49"/>
    </location>
</feature>
<feature type="topological domain" description="Cytoplasmic" evidence="2">
    <location>
        <begin position="50"/>
        <end position="69"/>
    </location>
</feature>
<feature type="transmembrane region" description="Helical; Name=2" evidence="2">
    <location>
        <begin position="70"/>
        <end position="90"/>
    </location>
</feature>
<feature type="topological domain" description="Extracellular" evidence="2">
    <location>
        <begin position="91"/>
        <end position="107"/>
    </location>
</feature>
<feature type="transmembrane region" description="Helical; Name=3" evidence="2">
    <location>
        <begin position="108"/>
        <end position="128"/>
    </location>
</feature>
<feature type="topological domain" description="Cytoplasmic" evidence="2">
    <location>
        <begin position="129"/>
        <end position="149"/>
    </location>
</feature>
<feature type="transmembrane region" description="Helical; Name=4" evidence="2">
    <location>
        <begin position="150"/>
        <end position="170"/>
    </location>
</feature>
<feature type="topological domain" description="Extracellular" evidence="2">
    <location>
        <begin position="171"/>
        <end position="192"/>
    </location>
</feature>
<feature type="transmembrane region" description="Helical; Name=5" evidence="2">
    <location>
        <begin position="193"/>
        <end position="213"/>
    </location>
</feature>
<feature type="topological domain" description="Cytoplasmic" evidence="2">
    <location>
        <begin position="214"/>
        <end position="245"/>
    </location>
</feature>
<feature type="transmembrane region" description="Helical; Name=6" evidence="2">
    <location>
        <begin position="246"/>
        <end position="266"/>
    </location>
</feature>
<feature type="topological domain" description="Extracellular" evidence="2">
    <location>
        <begin position="267"/>
        <end position="275"/>
    </location>
</feature>
<feature type="transmembrane region" description="Helical; Name=7" evidence="2">
    <location>
        <begin position="276"/>
        <end position="287" status="greater than"/>
    </location>
</feature>
<feature type="glycosylation site" description="N-linked (GlcNAc...) asparagine" evidence="2">
    <location>
        <position position="4"/>
    </location>
</feature>
<feature type="glycosylation site" description="N-linked (GlcNAc...) asparagine" evidence="2">
    <location>
        <position position="10"/>
    </location>
</feature>
<feature type="disulfide bond" evidence="3">
    <location>
        <begin position="105"/>
        <end position="182"/>
    </location>
</feature>
<feature type="non-terminal residue">
    <location>
        <position position="287"/>
    </location>
</feature>
<gene>
    <name type="primary">mtnr1ba</name>
    <name type="synonym">mel1b</name>
    <name type="synonym">mtnr1b</name>
</gene>
<protein>
    <recommendedName>
        <fullName>Melatonin receptor type 1B-A</fullName>
        <shortName>Mel-1B-R-A</shortName>
        <shortName>Mel1b receptor A</shortName>
    </recommendedName>
    <alternativeName>
        <fullName>Melatonin receptor Mel1b Z6.2</fullName>
    </alternativeName>
    <alternativeName>
        <fullName>Melatonin receptor Mel1b-19</fullName>
    </alternativeName>
    <alternativeName>
        <fullName>zMel1b-2</fullName>
    </alternativeName>
</protein>
<reference key="1">
    <citation type="submission" date="2002-10" db="EMBL/GenBank/DDBJ databases">
        <title>Zebrafish melatonin receptors.</title>
        <authorList>
            <person name="Danilova N.P."/>
        </authorList>
    </citation>
    <scope>NUCLEOTIDE SEQUENCE [MRNA] OF 1-240</scope>
</reference>
<reference key="2">
    <citation type="journal article" date="1996" name="FEBS Lett.">
        <title>Cloning of a melatonin-related receptor from human pituitary.</title>
        <authorList>
            <person name="Reppert S.M."/>
            <person name="Weaver D.R."/>
            <person name="Ebisawa T."/>
            <person name="Mahle C.D."/>
            <person name="Kolakowski L.F. Jr."/>
        </authorList>
    </citation>
    <scope>NUCLEOTIDE SEQUENCE [MRNA] OF 131-287</scope>
</reference>
<reference key="3">
    <citation type="journal article" date="2007" name="PLoS ONE">
        <title>The circadian system is a target and modulator of prenatal cocaine effects.</title>
        <authorList>
            <person name="Shang E.H."/>
            <person name="Zhdanova I.V."/>
        </authorList>
    </citation>
    <scope>INDUCTION</scope>
</reference>
<accession>Q90456</accession>
<accession>Q804J1</accession>
<evidence type="ECO:0000250" key="1"/>
<evidence type="ECO:0000255" key="2"/>
<evidence type="ECO:0000255" key="3">
    <source>
        <dbReference type="PROSITE-ProRule" id="PRU00521"/>
    </source>
</evidence>
<evidence type="ECO:0000269" key="4">
    <source>
    </source>
</evidence>
<proteinExistence type="evidence at transcript level"/>
<name>MR1BA_DANRE</name>
<organism>
    <name type="scientific">Danio rerio</name>
    <name type="common">Zebrafish</name>
    <name type="synonym">Brachydanio rerio</name>
    <dbReference type="NCBI Taxonomy" id="7955"/>
    <lineage>
        <taxon>Eukaryota</taxon>
        <taxon>Metazoa</taxon>
        <taxon>Chordata</taxon>
        <taxon>Craniata</taxon>
        <taxon>Vertebrata</taxon>
        <taxon>Euteleostomi</taxon>
        <taxon>Actinopterygii</taxon>
        <taxon>Neopterygii</taxon>
        <taxon>Teleostei</taxon>
        <taxon>Ostariophysi</taxon>
        <taxon>Cypriniformes</taxon>
        <taxon>Danionidae</taxon>
        <taxon>Danioninae</taxon>
        <taxon>Danio</taxon>
    </lineage>
</organism>
<sequence length="287" mass="31693">MPENVSLIRNRTEVGQGRAWGSGAGARPAWVVMVLAGVLIFTSVVDVLGNVLVIISVLRNRKLRNAGNAFVVSLAFADLLVVCYPYPLVLHAMLHAGWLPGEMECKVSGFLMGASVIGSIFNITAIAINRYCFICQANTYEKIYGRAGTLVLLTLVWVLTAIAILPNLSLGSLTYDPRVYSCTFSQTTSAGYTIAVVTVHFLLPIAVVTFCYLRIWVLVLRVRRRVTTDVRPRLRPSELRHFLTMFVVFVLFAVCWAPLNLIGLAVAVDPPRVGPLVPDWLFVMSYF</sequence>
<keyword id="KW-0090">Biological rhythms</keyword>
<keyword id="KW-1003">Cell membrane</keyword>
<keyword id="KW-1015">Disulfide bond</keyword>
<keyword id="KW-0297">G-protein coupled receptor</keyword>
<keyword id="KW-0325">Glycoprotein</keyword>
<keyword id="KW-0472">Membrane</keyword>
<keyword id="KW-0675">Receptor</keyword>
<keyword id="KW-1185">Reference proteome</keyword>
<keyword id="KW-0807">Transducer</keyword>
<keyword id="KW-0812">Transmembrane</keyword>
<keyword id="KW-1133">Transmembrane helix</keyword>
<comment type="function">
    <text evidence="1">High affinity receptor for melatonin. The activity of this receptor is mediated by pertussis toxin sensitive G proteins that inhibits adenylate cyclase activity (By similarity).</text>
</comment>
<comment type="subcellular location">
    <subcellularLocation>
        <location>Cell membrane</location>
        <topology>Multi-pass membrane protein</topology>
    </subcellularLocation>
</comment>
<comment type="induction">
    <text evidence="4">By cocaine, which increases the levels of day-time expression.</text>
</comment>
<comment type="similarity">
    <text evidence="3">Belongs to the G-protein coupled receptor 1 family.</text>
</comment>
<dbReference type="EMBL" id="AY166823">
    <property type="protein sequence ID" value="AAO23294.1"/>
    <property type="molecule type" value="mRNA"/>
</dbReference>
<dbReference type="EMBL" id="U52220">
    <property type="protein sequence ID" value="AAC59913.1"/>
    <property type="molecule type" value="mRNA"/>
</dbReference>
<dbReference type="SMR" id="Q90456"/>
<dbReference type="FunCoup" id="Q90456">
    <property type="interactions" value="3"/>
</dbReference>
<dbReference type="STRING" id="7955.ENSDARP00000070419"/>
<dbReference type="GlyCosmos" id="Q90456">
    <property type="glycosylation" value="2 sites, No reported glycans"/>
</dbReference>
<dbReference type="PaxDb" id="7955-ENSDARP00000070419"/>
<dbReference type="AGR" id="ZFIN:ZDB-GENE-990415-157"/>
<dbReference type="ZFIN" id="ZDB-GENE-990415-157">
    <property type="gene designation" value="mtnr1ba"/>
</dbReference>
<dbReference type="eggNOG" id="KOG3656">
    <property type="taxonomic scope" value="Eukaryota"/>
</dbReference>
<dbReference type="InParanoid" id="Q90456"/>
<dbReference type="Proteomes" id="UP000000437">
    <property type="component" value="Unplaced"/>
</dbReference>
<dbReference type="GO" id="GO:0005886">
    <property type="term" value="C:plasma membrane"/>
    <property type="evidence" value="ECO:0000318"/>
    <property type="project" value="GO_Central"/>
</dbReference>
<dbReference type="GO" id="GO:0004930">
    <property type="term" value="F:G protein-coupled receptor activity"/>
    <property type="evidence" value="ECO:0000318"/>
    <property type="project" value="GO_Central"/>
</dbReference>
<dbReference type="GO" id="GO:0008502">
    <property type="term" value="F:melatonin receptor activity"/>
    <property type="evidence" value="ECO:0007669"/>
    <property type="project" value="InterPro"/>
</dbReference>
<dbReference type="GO" id="GO:0007186">
    <property type="term" value="P:G protein-coupled receptor signaling pathway"/>
    <property type="evidence" value="ECO:0000318"/>
    <property type="project" value="GO_Central"/>
</dbReference>
<dbReference type="GO" id="GO:0048511">
    <property type="term" value="P:rhythmic process"/>
    <property type="evidence" value="ECO:0007669"/>
    <property type="project" value="UniProtKB-KW"/>
</dbReference>
<dbReference type="FunFam" id="1.20.1070.10:FF:000557">
    <property type="entry name" value="Melatonin receptor type 1A"/>
    <property type="match status" value="1"/>
</dbReference>
<dbReference type="Gene3D" id="1.20.1070.10">
    <property type="entry name" value="Rhodopsin 7-helix transmembrane proteins"/>
    <property type="match status" value="1"/>
</dbReference>
<dbReference type="InterPro" id="IPR000276">
    <property type="entry name" value="GPCR_Rhodpsn"/>
</dbReference>
<dbReference type="InterPro" id="IPR017452">
    <property type="entry name" value="GPCR_Rhodpsn_7TM"/>
</dbReference>
<dbReference type="InterPro" id="IPR002278">
    <property type="entry name" value="Mel_1A/1B_rcpt"/>
</dbReference>
<dbReference type="InterPro" id="IPR000025">
    <property type="entry name" value="Melatonin_rcpt"/>
</dbReference>
<dbReference type="PANTHER" id="PTHR24228">
    <property type="entry name" value="B2 BRADYKININ RECEPTOR/ANGIOTENSIN II RECEPTOR"/>
    <property type="match status" value="1"/>
</dbReference>
<dbReference type="PANTHER" id="PTHR24228:SF54">
    <property type="entry name" value="MELATONIN RECEPTOR TYPE 1B"/>
    <property type="match status" value="1"/>
</dbReference>
<dbReference type="Pfam" id="PF00001">
    <property type="entry name" value="7tm_1"/>
    <property type="match status" value="1"/>
</dbReference>
<dbReference type="PRINTS" id="PR00237">
    <property type="entry name" value="GPCRRHODOPSN"/>
</dbReference>
<dbReference type="PRINTS" id="PR01149">
    <property type="entry name" value="MELATONIN1AR"/>
</dbReference>
<dbReference type="PRINTS" id="PR00857">
    <property type="entry name" value="MELATONINR"/>
</dbReference>
<dbReference type="SMART" id="SM01381">
    <property type="entry name" value="7TM_GPCR_Srsx"/>
    <property type="match status" value="1"/>
</dbReference>
<dbReference type="SUPFAM" id="SSF81321">
    <property type="entry name" value="Family A G protein-coupled receptor-like"/>
    <property type="match status" value="1"/>
</dbReference>
<dbReference type="PROSITE" id="PS00237">
    <property type="entry name" value="G_PROTEIN_RECEP_F1_1"/>
    <property type="match status" value="1"/>
</dbReference>
<dbReference type="PROSITE" id="PS50262">
    <property type="entry name" value="G_PROTEIN_RECEP_F1_2"/>
    <property type="match status" value="1"/>
</dbReference>